<accession>Q8GYA6</accession>
<evidence type="ECO:0000250" key="1"/>
<evidence type="ECO:0000255" key="2">
    <source>
        <dbReference type="PROSITE-ProRule" id="PRU01185"/>
    </source>
</evidence>
<evidence type="ECO:0000269" key="3">
    <source>
    </source>
</evidence>
<evidence type="ECO:0000269" key="4">
    <source>
    </source>
</evidence>
<evidence type="ECO:0000305" key="5"/>
<evidence type="ECO:0000305" key="6">
    <source>
    </source>
</evidence>
<evidence type="ECO:0007744" key="7">
    <source>
    </source>
</evidence>
<feature type="initiator methionine" description="Removed" evidence="6 7">
    <location>
        <position position="1"/>
    </location>
</feature>
<feature type="chain" id="PRO_0000423174" description="26S proteasome non-ATPase regulatory subunit 13 homolog B">
    <location>
        <begin position="2"/>
        <end position="386"/>
    </location>
</feature>
<feature type="domain" description="PCI" evidence="2">
    <location>
        <begin position="174"/>
        <end position="347"/>
    </location>
</feature>
<feature type="modified residue" description="N-acetylalanine" evidence="7">
    <location>
        <position position="2"/>
    </location>
</feature>
<comment type="function">
    <text evidence="1">Acts as a regulatory subunit of the 26S proteasome which is involved in the ATP-dependent degradation of ubiquitinated proteins.</text>
</comment>
<comment type="subunit">
    <text evidence="3 4">Component of the 19S regulatory particle (RP/PA700) lid subcomplex of the 26S proteasome. The 26S proteasome is composed of a core protease (CP), known as the 20S proteasome, capped at one or both ends by the 19S regulatory particle (RP/PA700). The RP/PA700 complex is composed of at least 17 different subunits in two subcomplexes, the base and the lid, which form the portions proximal and distal to the 20S proteolytic core, respectively.</text>
</comment>
<comment type="tissue specificity">
    <text evidence="3">Ubiquitous with highest expression in flowers.</text>
</comment>
<comment type="similarity">
    <text evidence="5">Belongs to the proteasome subunit S11 family.</text>
</comment>
<gene>
    <name type="primary">RPN9B</name>
    <name type="ordered locus">At4g19006</name>
    <name type="ORF">F13C5.4</name>
</gene>
<name>PS13B_ARATH</name>
<protein>
    <recommendedName>
        <fullName>26S proteasome non-ATPase regulatory subunit 13 homolog B</fullName>
    </recommendedName>
    <alternativeName>
        <fullName>26S proteasome regulatory subunit RPN9b</fullName>
        <shortName>AtRNP9b</shortName>
    </alternativeName>
    <alternativeName>
        <fullName>26S proteasome regulatory subunit S11 homolog B</fullName>
    </alternativeName>
</protein>
<keyword id="KW-0007">Acetylation</keyword>
<keyword id="KW-0647">Proteasome</keyword>
<keyword id="KW-1185">Reference proteome</keyword>
<proteinExistence type="evidence at protein level"/>
<reference key="1">
    <citation type="journal article" date="2004" name="J. Biol. Chem.">
        <title>Purification of the Arabidopsis 26 S proteasome: biochemical and molecular analyses revealed the presence of multiple isoforms.</title>
        <authorList>
            <person name="Yang P."/>
            <person name="Fu H."/>
            <person name="Walker J."/>
            <person name="Papa C.M."/>
            <person name="Smalle J."/>
            <person name="Ju Y.-M."/>
            <person name="Vierstra R.D."/>
        </authorList>
    </citation>
    <scope>NUCLEOTIDE SEQUENCE [MRNA]</scope>
    <scope>SUBUNIT</scope>
    <scope>IDENTIFICATION BY MASS SPECTROMETRY</scope>
    <scope>TISSUE SPECIFICITY</scope>
    <source>
        <strain>cv. Columbia</strain>
    </source>
</reference>
<reference key="2">
    <citation type="journal article" date="1999" name="Nature">
        <title>Sequence and analysis of chromosome 4 of the plant Arabidopsis thaliana.</title>
        <authorList>
            <person name="Mayer K.F.X."/>
            <person name="Schueller C."/>
            <person name="Wambutt R."/>
            <person name="Murphy G."/>
            <person name="Volckaert G."/>
            <person name="Pohl T."/>
            <person name="Duesterhoeft A."/>
            <person name="Stiekema W."/>
            <person name="Entian K.-D."/>
            <person name="Terryn N."/>
            <person name="Harris B."/>
            <person name="Ansorge W."/>
            <person name="Brandt P."/>
            <person name="Grivell L.A."/>
            <person name="Rieger M."/>
            <person name="Weichselgartner M."/>
            <person name="de Simone V."/>
            <person name="Obermaier B."/>
            <person name="Mache R."/>
            <person name="Mueller M."/>
            <person name="Kreis M."/>
            <person name="Delseny M."/>
            <person name="Puigdomenech P."/>
            <person name="Watson M."/>
            <person name="Schmidtheini T."/>
            <person name="Reichert B."/>
            <person name="Portetelle D."/>
            <person name="Perez-Alonso M."/>
            <person name="Boutry M."/>
            <person name="Bancroft I."/>
            <person name="Vos P."/>
            <person name="Hoheisel J."/>
            <person name="Zimmermann W."/>
            <person name="Wedler H."/>
            <person name="Ridley P."/>
            <person name="Langham S.-A."/>
            <person name="McCullagh B."/>
            <person name="Bilham L."/>
            <person name="Robben J."/>
            <person name="van der Schueren J."/>
            <person name="Grymonprez B."/>
            <person name="Chuang Y.-J."/>
            <person name="Vandenbussche F."/>
            <person name="Braeken M."/>
            <person name="Weltjens I."/>
            <person name="Voet M."/>
            <person name="Bastiaens I."/>
            <person name="Aert R."/>
            <person name="Defoor E."/>
            <person name="Weitzenegger T."/>
            <person name="Bothe G."/>
            <person name="Ramsperger U."/>
            <person name="Hilbert H."/>
            <person name="Braun M."/>
            <person name="Holzer E."/>
            <person name="Brandt A."/>
            <person name="Peters S."/>
            <person name="van Staveren M."/>
            <person name="Dirkse W."/>
            <person name="Mooijman P."/>
            <person name="Klein Lankhorst R."/>
            <person name="Rose M."/>
            <person name="Hauf J."/>
            <person name="Koetter P."/>
            <person name="Berneiser S."/>
            <person name="Hempel S."/>
            <person name="Feldpausch M."/>
            <person name="Lamberth S."/>
            <person name="Van den Daele H."/>
            <person name="De Keyser A."/>
            <person name="Buysshaert C."/>
            <person name="Gielen J."/>
            <person name="Villarroel R."/>
            <person name="De Clercq R."/>
            <person name="van Montagu M."/>
            <person name="Rogers J."/>
            <person name="Cronin A."/>
            <person name="Quail M.A."/>
            <person name="Bray-Allen S."/>
            <person name="Clark L."/>
            <person name="Doggett J."/>
            <person name="Hall S."/>
            <person name="Kay M."/>
            <person name="Lennard N."/>
            <person name="McLay K."/>
            <person name="Mayes R."/>
            <person name="Pettett A."/>
            <person name="Rajandream M.A."/>
            <person name="Lyne M."/>
            <person name="Benes V."/>
            <person name="Rechmann S."/>
            <person name="Borkova D."/>
            <person name="Bloecker H."/>
            <person name="Scharfe M."/>
            <person name="Grimm M."/>
            <person name="Loehnert T.-H."/>
            <person name="Dose S."/>
            <person name="de Haan M."/>
            <person name="Maarse A.C."/>
            <person name="Schaefer M."/>
            <person name="Mueller-Auer S."/>
            <person name="Gabel C."/>
            <person name="Fuchs M."/>
            <person name="Fartmann B."/>
            <person name="Granderath K."/>
            <person name="Dauner D."/>
            <person name="Herzl A."/>
            <person name="Neumann S."/>
            <person name="Argiriou A."/>
            <person name="Vitale D."/>
            <person name="Liguori R."/>
            <person name="Piravandi E."/>
            <person name="Massenet O."/>
            <person name="Quigley F."/>
            <person name="Clabauld G."/>
            <person name="Muendlein A."/>
            <person name="Felber R."/>
            <person name="Schnabl S."/>
            <person name="Hiller R."/>
            <person name="Schmidt W."/>
            <person name="Lecharny A."/>
            <person name="Aubourg S."/>
            <person name="Chefdor F."/>
            <person name="Cooke R."/>
            <person name="Berger C."/>
            <person name="Monfort A."/>
            <person name="Casacuberta E."/>
            <person name="Gibbons T."/>
            <person name="Weber N."/>
            <person name="Vandenbol M."/>
            <person name="Bargues M."/>
            <person name="Terol J."/>
            <person name="Torres A."/>
            <person name="Perez-Perez A."/>
            <person name="Purnelle B."/>
            <person name="Bent E."/>
            <person name="Johnson S."/>
            <person name="Tacon D."/>
            <person name="Jesse T."/>
            <person name="Heijnen L."/>
            <person name="Schwarz S."/>
            <person name="Scholler P."/>
            <person name="Heber S."/>
            <person name="Francs P."/>
            <person name="Bielke C."/>
            <person name="Frishman D."/>
            <person name="Haase D."/>
            <person name="Lemcke K."/>
            <person name="Mewes H.-W."/>
            <person name="Stocker S."/>
            <person name="Zaccaria P."/>
            <person name="Bevan M."/>
            <person name="Wilson R.K."/>
            <person name="de la Bastide M."/>
            <person name="Habermann K."/>
            <person name="Parnell L."/>
            <person name="Dedhia N."/>
            <person name="Gnoj L."/>
            <person name="Schutz K."/>
            <person name="Huang E."/>
            <person name="Spiegel L."/>
            <person name="Sekhon M."/>
            <person name="Murray J."/>
            <person name="Sheet P."/>
            <person name="Cordes M."/>
            <person name="Abu-Threideh J."/>
            <person name="Stoneking T."/>
            <person name="Kalicki J."/>
            <person name="Graves T."/>
            <person name="Harmon G."/>
            <person name="Edwards J."/>
            <person name="Latreille P."/>
            <person name="Courtney L."/>
            <person name="Cloud J."/>
            <person name="Abbott A."/>
            <person name="Scott K."/>
            <person name="Johnson D."/>
            <person name="Minx P."/>
            <person name="Bentley D."/>
            <person name="Fulton B."/>
            <person name="Miller N."/>
            <person name="Greco T."/>
            <person name="Kemp K."/>
            <person name="Kramer J."/>
            <person name="Fulton L."/>
            <person name="Mardis E."/>
            <person name="Dante M."/>
            <person name="Pepin K."/>
            <person name="Hillier L.W."/>
            <person name="Nelson J."/>
            <person name="Spieth J."/>
            <person name="Ryan E."/>
            <person name="Andrews S."/>
            <person name="Geisel C."/>
            <person name="Layman D."/>
            <person name="Du H."/>
            <person name="Ali J."/>
            <person name="Berghoff A."/>
            <person name="Jones K."/>
            <person name="Drone K."/>
            <person name="Cotton M."/>
            <person name="Joshu C."/>
            <person name="Antonoiu B."/>
            <person name="Zidanic M."/>
            <person name="Strong C."/>
            <person name="Sun H."/>
            <person name="Lamar B."/>
            <person name="Yordan C."/>
            <person name="Ma P."/>
            <person name="Zhong J."/>
            <person name="Preston R."/>
            <person name="Vil D."/>
            <person name="Shekher M."/>
            <person name="Matero A."/>
            <person name="Shah R."/>
            <person name="Swaby I.K."/>
            <person name="O'Shaughnessy A."/>
            <person name="Rodriguez M."/>
            <person name="Hoffman J."/>
            <person name="Till S."/>
            <person name="Granat S."/>
            <person name="Shohdy N."/>
            <person name="Hasegawa A."/>
            <person name="Hameed A."/>
            <person name="Lodhi M."/>
            <person name="Johnson A."/>
            <person name="Chen E."/>
            <person name="Marra M.A."/>
            <person name="Martienssen R."/>
            <person name="McCombie W.R."/>
        </authorList>
    </citation>
    <scope>NUCLEOTIDE SEQUENCE [LARGE SCALE GENOMIC DNA]</scope>
    <source>
        <strain>cv. Columbia</strain>
    </source>
</reference>
<reference key="3">
    <citation type="journal article" date="2017" name="Plant J.">
        <title>Araport11: a complete reannotation of the Arabidopsis thaliana reference genome.</title>
        <authorList>
            <person name="Cheng C.Y."/>
            <person name="Krishnakumar V."/>
            <person name="Chan A.P."/>
            <person name="Thibaud-Nissen F."/>
            <person name="Schobel S."/>
            <person name="Town C.D."/>
        </authorList>
    </citation>
    <scope>GENOME REANNOTATION</scope>
    <source>
        <strain>cv. Columbia</strain>
    </source>
</reference>
<reference key="4">
    <citation type="journal article" date="2002" name="Science">
        <title>Functional annotation of a full-length Arabidopsis cDNA collection.</title>
        <authorList>
            <person name="Seki M."/>
            <person name="Narusaka M."/>
            <person name="Kamiya A."/>
            <person name="Ishida J."/>
            <person name="Satou M."/>
            <person name="Sakurai T."/>
            <person name="Nakajima M."/>
            <person name="Enju A."/>
            <person name="Akiyama K."/>
            <person name="Oono Y."/>
            <person name="Muramatsu M."/>
            <person name="Hayashizaki Y."/>
            <person name="Kawai J."/>
            <person name="Carninci P."/>
            <person name="Itoh M."/>
            <person name="Ishii Y."/>
            <person name="Arakawa T."/>
            <person name="Shibata K."/>
            <person name="Shinagawa A."/>
            <person name="Shinozaki K."/>
        </authorList>
    </citation>
    <scope>NUCLEOTIDE SEQUENCE [LARGE SCALE MRNA]</scope>
    <source>
        <strain>cv. Columbia</strain>
    </source>
</reference>
<reference key="5">
    <citation type="journal article" date="2010" name="J. Biol. Chem.">
        <title>Affinity purification of the Arabidopsis 26 S proteasome reveals a diverse array of plant proteolytic complexes.</title>
        <authorList>
            <person name="Book A.J."/>
            <person name="Gladman N.P."/>
            <person name="Lee S.S."/>
            <person name="Scalf M."/>
            <person name="Smith L.M."/>
            <person name="Vierstra R.D."/>
        </authorList>
    </citation>
    <scope>IDENTIFICATION BY MASS SPECTROMETRY</scope>
    <scope>CHARACTERIZATION OF THE 26S PROTEASOME COMPLEX</scope>
    <scope>SUBUNIT</scope>
    <scope>CLEAVAGE OF INITIATOR METHIONINE</scope>
</reference>
<reference key="6">
    <citation type="journal article" date="2012" name="Mol. Cell. Proteomics">
        <title>Comparative large-scale characterisation of plant vs. mammal proteins reveals similar and idiosyncratic N-alpha acetylation features.</title>
        <authorList>
            <person name="Bienvenut W.V."/>
            <person name="Sumpton D."/>
            <person name="Martinez A."/>
            <person name="Lilla S."/>
            <person name="Espagne C."/>
            <person name="Meinnel T."/>
            <person name="Giglione C."/>
        </authorList>
    </citation>
    <scope>ACETYLATION [LARGE SCALE ANALYSIS] AT ALA-2</scope>
    <scope>CLEAVAGE OF INITIATOR METHIONINE [LARGE SCALE ANALYSIS]</scope>
    <scope>IDENTIFICATION BY MASS SPECTROMETRY [LARGE SCALE ANALYSIS]</scope>
</reference>
<dbReference type="EMBL" id="AY230842">
    <property type="protein sequence ID" value="AAP86669.1"/>
    <property type="molecule type" value="mRNA"/>
</dbReference>
<dbReference type="EMBL" id="AL021711">
    <property type="status" value="NOT_ANNOTATED_CDS"/>
    <property type="molecule type" value="Genomic_DNA"/>
</dbReference>
<dbReference type="EMBL" id="AL161549">
    <property type="status" value="NOT_ANNOTATED_CDS"/>
    <property type="molecule type" value="Genomic_DNA"/>
</dbReference>
<dbReference type="EMBL" id="CP002687">
    <property type="protein sequence ID" value="AEE84124.1"/>
    <property type="molecule type" value="Genomic_DNA"/>
</dbReference>
<dbReference type="EMBL" id="AK117761">
    <property type="protein sequence ID" value="BAC42409.1"/>
    <property type="molecule type" value="mRNA"/>
</dbReference>
<dbReference type="RefSeq" id="NP_680721.2">
    <property type="nucleotide sequence ID" value="NM_148355.5"/>
</dbReference>
<dbReference type="SMR" id="Q8GYA6"/>
<dbReference type="BioGRID" id="12931">
    <property type="interactions" value="103"/>
</dbReference>
<dbReference type="FunCoup" id="Q8GYA6">
    <property type="interactions" value="4758"/>
</dbReference>
<dbReference type="IntAct" id="Q8GYA6">
    <property type="interactions" value="2"/>
</dbReference>
<dbReference type="STRING" id="3702.Q8GYA6"/>
<dbReference type="iPTMnet" id="Q8GYA6"/>
<dbReference type="PaxDb" id="3702-AT4G19006.1"/>
<dbReference type="ProteomicsDB" id="226301"/>
<dbReference type="EnsemblPlants" id="AT4G19006.1">
    <property type="protein sequence ID" value="AT4G19006.1"/>
    <property type="gene ID" value="AT4G19006"/>
</dbReference>
<dbReference type="GeneID" id="827638"/>
<dbReference type="Gramene" id="AT4G19006.1">
    <property type="protein sequence ID" value="AT4G19006.1"/>
    <property type="gene ID" value="AT4G19006"/>
</dbReference>
<dbReference type="KEGG" id="ath:AT4G19006"/>
<dbReference type="Araport" id="AT4G19006"/>
<dbReference type="TAIR" id="AT4G19006"/>
<dbReference type="eggNOG" id="KOG2908">
    <property type="taxonomic scope" value="Eukaryota"/>
</dbReference>
<dbReference type="HOGENOM" id="CLU_042989_0_0_1"/>
<dbReference type="InParanoid" id="Q8GYA6"/>
<dbReference type="PhylomeDB" id="Q8GYA6"/>
<dbReference type="PRO" id="PR:Q8GYA6"/>
<dbReference type="Proteomes" id="UP000006548">
    <property type="component" value="Chromosome 4"/>
</dbReference>
<dbReference type="ExpressionAtlas" id="Q8GYA6">
    <property type="expression patterns" value="baseline and differential"/>
</dbReference>
<dbReference type="GO" id="GO:0005829">
    <property type="term" value="C:cytosol"/>
    <property type="evidence" value="ECO:0007005"/>
    <property type="project" value="TAIR"/>
</dbReference>
<dbReference type="GO" id="GO:0005634">
    <property type="term" value="C:nucleus"/>
    <property type="evidence" value="ECO:0000304"/>
    <property type="project" value="TAIR"/>
</dbReference>
<dbReference type="GO" id="GO:0000502">
    <property type="term" value="C:proteasome complex"/>
    <property type="evidence" value="ECO:0000314"/>
    <property type="project" value="TAIR"/>
</dbReference>
<dbReference type="GO" id="GO:0030163">
    <property type="term" value="P:protein catabolic process"/>
    <property type="evidence" value="ECO:0000304"/>
    <property type="project" value="TAIR"/>
</dbReference>
<dbReference type="FunFam" id="1.25.40.570:FF:000024">
    <property type="entry name" value="26S proteasome non-ATPase regulatory subunit 13 homolog B"/>
    <property type="match status" value="1"/>
</dbReference>
<dbReference type="Gene3D" id="1.25.40.570">
    <property type="match status" value="1"/>
</dbReference>
<dbReference type="InterPro" id="IPR000717">
    <property type="entry name" value="PCI_dom"/>
</dbReference>
<dbReference type="InterPro" id="IPR054179">
    <property type="entry name" value="PSD13_N"/>
</dbReference>
<dbReference type="InterPro" id="IPR035298">
    <property type="entry name" value="PSMD13"/>
</dbReference>
<dbReference type="InterPro" id="IPR036390">
    <property type="entry name" value="WH_DNA-bd_sf"/>
</dbReference>
<dbReference type="PANTHER" id="PTHR10539">
    <property type="entry name" value="26S PROTEASOME NON-ATPASE REGULATORY SUBUNIT 13"/>
    <property type="match status" value="1"/>
</dbReference>
<dbReference type="PANTHER" id="PTHR10539:SF5">
    <property type="entry name" value="26S PROTEASOME NON-ATPASE REGULATORY SUBUNIT 13 HOMOLOG B"/>
    <property type="match status" value="1"/>
</dbReference>
<dbReference type="Pfam" id="PF01399">
    <property type="entry name" value="PCI"/>
    <property type="match status" value="1"/>
</dbReference>
<dbReference type="Pfam" id="PF22037">
    <property type="entry name" value="PSD13_N"/>
    <property type="match status" value="1"/>
</dbReference>
<dbReference type="SMART" id="SM00088">
    <property type="entry name" value="PINT"/>
    <property type="match status" value="1"/>
</dbReference>
<dbReference type="SUPFAM" id="SSF46785">
    <property type="entry name" value="Winged helix' DNA-binding domain"/>
    <property type="match status" value="1"/>
</dbReference>
<dbReference type="PROSITE" id="PS50250">
    <property type="entry name" value="PCI"/>
    <property type="match status" value="1"/>
</dbReference>
<sequence length="386" mass="44021">MAALQYLESQKNAHPELGEWYNSLADLYQKKLWHQLTLKLEQFIALSVFQAGDALIQLYNNFITDFETRINLLKLAHFAVVVSRQYPEKEAAVSYLEGVIEKLKATKESRINEPISYIETQIALFKLEQGDQKECKKILDDGKSLLDSMTDIDPSVYANFFWVSSQYHKVRQEFSEFYKNALLYLAYTSVDSLSESFKLDLAFDLSLSALLGENIYNFGELLAHPILKSLLGTNVEWLYHILQAFNHGDLVQYQELCRVHNASLSAQPALVENEKKLLEKINILCLIEIIFSRPAEDRTIPLSVIAERTKLSIEDVEHLLMKSLSVHLIEGILDQVNGTVYVSWAQPRVLGIPQIKSLRDQLDSWVDKVHTTLLSVEAETPDLVAA</sequence>
<organism>
    <name type="scientific">Arabidopsis thaliana</name>
    <name type="common">Mouse-ear cress</name>
    <dbReference type="NCBI Taxonomy" id="3702"/>
    <lineage>
        <taxon>Eukaryota</taxon>
        <taxon>Viridiplantae</taxon>
        <taxon>Streptophyta</taxon>
        <taxon>Embryophyta</taxon>
        <taxon>Tracheophyta</taxon>
        <taxon>Spermatophyta</taxon>
        <taxon>Magnoliopsida</taxon>
        <taxon>eudicotyledons</taxon>
        <taxon>Gunneridae</taxon>
        <taxon>Pentapetalae</taxon>
        <taxon>rosids</taxon>
        <taxon>malvids</taxon>
        <taxon>Brassicales</taxon>
        <taxon>Brassicaceae</taxon>
        <taxon>Camelineae</taxon>
        <taxon>Arabidopsis</taxon>
    </lineage>
</organism>